<proteinExistence type="uncertain"/>
<comment type="caution">
    <text evidence="1">Could be the product of a pseudogene.</text>
</comment>
<comment type="sequence caution" evidence="1">
    <conflict type="frameshift">
        <sequence resource="EMBL-CDS" id="BAE76389"/>
    </conflict>
</comment>
<comment type="sequence caution" evidence="1">
    <conflict type="frameshift">
        <sequence resource="EMBL-CDS" id="BAE76390"/>
    </conflict>
</comment>
<comment type="sequence caution" evidence="1">
    <conflict type="frameshift">
        <sequence resource="EMBL" id="U00096"/>
    </conflict>
</comment>
<reference key="1">
    <citation type="journal article" date="1997" name="Science">
        <title>The complete genome sequence of Escherichia coli K-12.</title>
        <authorList>
            <person name="Blattner F.R."/>
            <person name="Plunkett G. III"/>
            <person name="Bloch C.A."/>
            <person name="Perna N.T."/>
            <person name="Burland V."/>
            <person name="Riley M."/>
            <person name="Collado-Vides J."/>
            <person name="Glasner J.D."/>
            <person name="Rode C.K."/>
            <person name="Mayhew G.F."/>
            <person name="Gregor J."/>
            <person name="Davis N.W."/>
            <person name="Kirkpatrick H.A."/>
            <person name="Goeden M.A."/>
            <person name="Rose D.J."/>
            <person name="Mau B."/>
            <person name="Shao Y."/>
        </authorList>
    </citation>
    <scope>NUCLEOTIDE SEQUENCE [LARGE SCALE GENOMIC DNA]</scope>
    <source>
        <strain>K12 / MG1655 / ATCC 47076</strain>
    </source>
</reference>
<reference key="2">
    <citation type="journal article" date="2006" name="Mol. Syst. Biol.">
        <title>Highly accurate genome sequences of Escherichia coli K-12 strains MG1655 and W3110.</title>
        <authorList>
            <person name="Hayashi K."/>
            <person name="Morooka N."/>
            <person name="Yamamoto Y."/>
            <person name="Fujita K."/>
            <person name="Isono K."/>
            <person name="Choi S."/>
            <person name="Ohtsubo E."/>
            <person name="Baba T."/>
            <person name="Wanner B.L."/>
            <person name="Mori H."/>
            <person name="Horiuchi T."/>
        </authorList>
    </citation>
    <scope>NUCLEOTIDE SEQUENCE [LARGE SCALE GENOMIC DNA]</scope>
    <source>
        <strain>K12 / W3110 / ATCC 27325 / DSM 5911</strain>
    </source>
</reference>
<evidence type="ECO:0000305" key="1"/>
<accession>P76000</accession>
<accession>Q2EER4</accession>
<accession>Q2MBG6</accession>
<accession>Q2MBG7</accession>
<feature type="chain" id="PRO_0000252171" description="Putative uncharacterized protein YcgI">
    <location>
        <begin position="1"/>
        <end position="147"/>
    </location>
</feature>
<name>YCGI_ECOLI</name>
<protein>
    <recommendedName>
        <fullName>Putative uncharacterized protein YcgI</fullName>
    </recommendedName>
</protein>
<sequence>MNTIHLRCLFRMNPLVWCLRADVAAELRSLRRYYHLSNGMESKSVDTRSIYRELGATLSYNMRLGNGMEXEPWLKAAVRKEFVDDNRVKVNNDGNFVNDLSGRRGIYQAAIKASFSSTFSGHLGVGYSHGAGVESPWNAVAGVNWSF</sequence>
<gene>
    <name type="primary">ycgI</name>
    <name type="synonym">ymgH</name>
    <name type="ordered locus">b4521</name>
    <name type="ordered locus">JW1162/JW5179</name>
    <name type="ORF">b1173</name>
</gene>
<dbReference type="EMBL" id="U00096">
    <property type="status" value="NOT_ANNOTATED_CDS"/>
    <property type="molecule type" value="Genomic_DNA"/>
</dbReference>
<dbReference type="EMBL" id="AP009048">
    <property type="protein sequence ID" value="BAE76390.1"/>
    <property type="status" value="ALT_FRAME"/>
    <property type="molecule type" value="Genomic_DNA"/>
</dbReference>
<dbReference type="EMBL" id="AP009048">
    <property type="protein sequence ID" value="BAE76389.1"/>
    <property type="status" value="ALT_FRAME"/>
    <property type="molecule type" value="Genomic_DNA"/>
</dbReference>
<dbReference type="PIR" id="B64863">
    <property type="entry name" value="B64863"/>
</dbReference>
<dbReference type="BioGRID" id="4260110">
    <property type="interactions" value="12"/>
</dbReference>
<dbReference type="BioGRID" id="4262866">
    <property type="interactions" value="14"/>
</dbReference>
<dbReference type="FunCoup" id="P76000">
    <property type="interactions" value="113"/>
</dbReference>
<dbReference type="KEGG" id="ecj:JW1162"/>
<dbReference type="KEGG" id="ecj:JW5179"/>
<dbReference type="HOGENOM" id="CLU_201065_0_0_6"/>
<dbReference type="InParanoid" id="P76000"/>
<dbReference type="Proteomes" id="UP000000625">
    <property type="component" value="Chromosome"/>
</dbReference>
<dbReference type="GO" id="GO:0019867">
    <property type="term" value="C:outer membrane"/>
    <property type="evidence" value="ECO:0007669"/>
    <property type="project" value="InterPro"/>
</dbReference>
<dbReference type="Gene3D" id="2.40.128.130">
    <property type="entry name" value="Autotransporter beta-domain"/>
    <property type="match status" value="1"/>
</dbReference>
<dbReference type="InterPro" id="IPR005546">
    <property type="entry name" value="Autotransporte_beta"/>
</dbReference>
<dbReference type="InterPro" id="IPR036709">
    <property type="entry name" value="Autotransporte_beta_dom_sf"/>
</dbReference>
<dbReference type="InterPro" id="IPR051551">
    <property type="entry name" value="Autotransporter_adhesion"/>
</dbReference>
<dbReference type="InterPro" id="IPR006315">
    <property type="entry name" value="OM_autotransptr_brl_dom"/>
</dbReference>
<dbReference type="InterPro" id="IPR003991">
    <property type="entry name" value="Pertactin_virulence_factor"/>
</dbReference>
<dbReference type="NCBIfam" id="TIGR01414">
    <property type="entry name" value="autotrans_barl"/>
    <property type="match status" value="1"/>
</dbReference>
<dbReference type="PANTHER" id="PTHR35037:SF7">
    <property type="entry name" value="AUTOTRANSPORTER"/>
    <property type="match status" value="1"/>
</dbReference>
<dbReference type="PANTHER" id="PTHR35037">
    <property type="entry name" value="C-TERMINAL REGION OF AIDA-LIKE PROTEIN"/>
    <property type="match status" value="1"/>
</dbReference>
<dbReference type="Pfam" id="PF03797">
    <property type="entry name" value="Autotransporter"/>
    <property type="match status" value="1"/>
</dbReference>
<dbReference type="PRINTS" id="PR01484">
    <property type="entry name" value="PRTACTNFAMLY"/>
</dbReference>
<dbReference type="SUPFAM" id="SSF103515">
    <property type="entry name" value="Autotransporter"/>
    <property type="match status" value="1"/>
</dbReference>
<keyword id="KW-1185">Reference proteome</keyword>
<organism>
    <name type="scientific">Escherichia coli (strain K12)</name>
    <dbReference type="NCBI Taxonomy" id="83333"/>
    <lineage>
        <taxon>Bacteria</taxon>
        <taxon>Pseudomonadati</taxon>
        <taxon>Pseudomonadota</taxon>
        <taxon>Gammaproteobacteria</taxon>
        <taxon>Enterobacterales</taxon>
        <taxon>Enterobacteriaceae</taxon>
        <taxon>Escherichia</taxon>
    </lineage>
</organism>